<feature type="chain" id="PRO_0000255374" description="Glycerol-3-phosphate dehydrogenase [NAD(P)+] 1">
    <location>
        <begin position="1"/>
        <end position="330"/>
    </location>
</feature>
<feature type="active site" description="Proton acceptor" evidence="1">
    <location>
        <position position="188"/>
    </location>
</feature>
<feature type="binding site" evidence="1">
    <location>
        <position position="15"/>
    </location>
    <ligand>
        <name>NADPH</name>
        <dbReference type="ChEBI" id="CHEBI:57783"/>
    </ligand>
</feature>
<feature type="binding site" evidence="1">
    <location>
        <position position="35"/>
    </location>
    <ligand>
        <name>NADPH</name>
        <dbReference type="ChEBI" id="CHEBI:57783"/>
    </ligand>
</feature>
<feature type="binding site" evidence="1">
    <location>
        <position position="105"/>
    </location>
    <ligand>
        <name>NADPH</name>
        <dbReference type="ChEBI" id="CHEBI:57783"/>
    </ligand>
</feature>
<feature type="binding site" evidence="1">
    <location>
        <position position="105"/>
    </location>
    <ligand>
        <name>sn-glycerol 3-phosphate</name>
        <dbReference type="ChEBI" id="CHEBI:57597"/>
    </ligand>
</feature>
<feature type="binding site" evidence="1">
    <location>
        <position position="133"/>
    </location>
    <ligand>
        <name>sn-glycerol 3-phosphate</name>
        <dbReference type="ChEBI" id="CHEBI:57597"/>
    </ligand>
</feature>
<feature type="binding site" evidence="1">
    <location>
        <position position="135"/>
    </location>
    <ligand>
        <name>sn-glycerol 3-phosphate</name>
        <dbReference type="ChEBI" id="CHEBI:57597"/>
    </ligand>
</feature>
<feature type="binding site" evidence="1">
    <location>
        <position position="137"/>
    </location>
    <ligand>
        <name>NADPH</name>
        <dbReference type="ChEBI" id="CHEBI:57783"/>
    </ligand>
</feature>
<feature type="binding site" evidence="1">
    <location>
        <position position="188"/>
    </location>
    <ligand>
        <name>sn-glycerol 3-phosphate</name>
        <dbReference type="ChEBI" id="CHEBI:57597"/>
    </ligand>
</feature>
<feature type="binding site" evidence="1">
    <location>
        <position position="241"/>
    </location>
    <ligand>
        <name>sn-glycerol 3-phosphate</name>
        <dbReference type="ChEBI" id="CHEBI:57597"/>
    </ligand>
</feature>
<feature type="binding site" evidence="1">
    <location>
        <position position="251"/>
    </location>
    <ligand>
        <name>sn-glycerol 3-phosphate</name>
        <dbReference type="ChEBI" id="CHEBI:57597"/>
    </ligand>
</feature>
<feature type="binding site" evidence="1">
    <location>
        <position position="252"/>
    </location>
    <ligand>
        <name>NADPH</name>
        <dbReference type="ChEBI" id="CHEBI:57783"/>
    </ligand>
</feature>
<feature type="binding site" evidence="1">
    <location>
        <position position="252"/>
    </location>
    <ligand>
        <name>sn-glycerol 3-phosphate</name>
        <dbReference type="ChEBI" id="CHEBI:57597"/>
    </ligand>
</feature>
<feature type="binding site" evidence="1">
    <location>
        <position position="253"/>
    </location>
    <ligand>
        <name>sn-glycerol 3-phosphate</name>
        <dbReference type="ChEBI" id="CHEBI:57597"/>
    </ligand>
</feature>
<feature type="binding site" evidence="1">
    <location>
        <position position="276"/>
    </location>
    <ligand>
        <name>NADPH</name>
        <dbReference type="ChEBI" id="CHEBI:57783"/>
    </ligand>
</feature>
<feature type="binding site" evidence="1">
    <location>
        <position position="278"/>
    </location>
    <ligand>
        <name>NADPH</name>
        <dbReference type="ChEBI" id="CHEBI:57783"/>
    </ligand>
</feature>
<dbReference type="EC" id="1.1.1.94" evidence="1"/>
<dbReference type="EMBL" id="CP000356">
    <property type="protein sequence ID" value="ABF54579.1"/>
    <property type="molecule type" value="Genomic_DNA"/>
</dbReference>
<dbReference type="RefSeq" id="WP_011543143.1">
    <property type="nucleotide sequence ID" value="NC_008048.1"/>
</dbReference>
<dbReference type="SMR" id="Q1GP43"/>
<dbReference type="STRING" id="317655.Sala_2874"/>
<dbReference type="KEGG" id="sal:Sala_2874"/>
<dbReference type="eggNOG" id="COG0240">
    <property type="taxonomic scope" value="Bacteria"/>
</dbReference>
<dbReference type="HOGENOM" id="CLU_033449_0_2_5"/>
<dbReference type="OrthoDB" id="9812273at2"/>
<dbReference type="UniPathway" id="UPA00940"/>
<dbReference type="Proteomes" id="UP000006578">
    <property type="component" value="Chromosome"/>
</dbReference>
<dbReference type="GO" id="GO:0005829">
    <property type="term" value="C:cytosol"/>
    <property type="evidence" value="ECO:0007669"/>
    <property type="project" value="TreeGrafter"/>
</dbReference>
<dbReference type="GO" id="GO:0047952">
    <property type="term" value="F:glycerol-3-phosphate dehydrogenase [NAD(P)+] activity"/>
    <property type="evidence" value="ECO:0007669"/>
    <property type="project" value="UniProtKB-UniRule"/>
</dbReference>
<dbReference type="GO" id="GO:0051287">
    <property type="term" value="F:NAD binding"/>
    <property type="evidence" value="ECO:0007669"/>
    <property type="project" value="InterPro"/>
</dbReference>
<dbReference type="GO" id="GO:0005975">
    <property type="term" value="P:carbohydrate metabolic process"/>
    <property type="evidence" value="ECO:0007669"/>
    <property type="project" value="InterPro"/>
</dbReference>
<dbReference type="GO" id="GO:0046167">
    <property type="term" value="P:glycerol-3-phosphate biosynthetic process"/>
    <property type="evidence" value="ECO:0007669"/>
    <property type="project" value="UniProtKB-UniRule"/>
</dbReference>
<dbReference type="GO" id="GO:0046168">
    <property type="term" value="P:glycerol-3-phosphate catabolic process"/>
    <property type="evidence" value="ECO:0007669"/>
    <property type="project" value="InterPro"/>
</dbReference>
<dbReference type="GO" id="GO:0006650">
    <property type="term" value="P:glycerophospholipid metabolic process"/>
    <property type="evidence" value="ECO:0007669"/>
    <property type="project" value="UniProtKB-UniRule"/>
</dbReference>
<dbReference type="GO" id="GO:0008654">
    <property type="term" value="P:phospholipid biosynthetic process"/>
    <property type="evidence" value="ECO:0007669"/>
    <property type="project" value="UniProtKB-KW"/>
</dbReference>
<dbReference type="FunFam" id="1.10.1040.10:FF:000001">
    <property type="entry name" value="Glycerol-3-phosphate dehydrogenase [NAD(P)+]"/>
    <property type="match status" value="1"/>
</dbReference>
<dbReference type="FunFam" id="3.40.50.720:FF:000019">
    <property type="entry name" value="Glycerol-3-phosphate dehydrogenase [NAD(P)+]"/>
    <property type="match status" value="1"/>
</dbReference>
<dbReference type="Gene3D" id="1.10.1040.10">
    <property type="entry name" value="N-(1-d-carboxylethyl)-l-norvaline Dehydrogenase, domain 2"/>
    <property type="match status" value="1"/>
</dbReference>
<dbReference type="Gene3D" id="3.40.50.720">
    <property type="entry name" value="NAD(P)-binding Rossmann-like Domain"/>
    <property type="match status" value="1"/>
</dbReference>
<dbReference type="HAMAP" id="MF_00394">
    <property type="entry name" value="NAD_Glyc3P_dehydrog"/>
    <property type="match status" value="1"/>
</dbReference>
<dbReference type="InterPro" id="IPR008927">
    <property type="entry name" value="6-PGluconate_DH-like_C_sf"/>
</dbReference>
<dbReference type="InterPro" id="IPR013328">
    <property type="entry name" value="6PGD_dom2"/>
</dbReference>
<dbReference type="InterPro" id="IPR006168">
    <property type="entry name" value="G3P_DH_NAD-dep"/>
</dbReference>
<dbReference type="InterPro" id="IPR006109">
    <property type="entry name" value="G3P_DH_NAD-dep_C"/>
</dbReference>
<dbReference type="InterPro" id="IPR011128">
    <property type="entry name" value="G3P_DH_NAD-dep_N"/>
</dbReference>
<dbReference type="InterPro" id="IPR036291">
    <property type="entry name" value="NAD(P)-bd_dom_sf"/>
</dbReference>
<dbReference type="NCBIfam" id="NF000940">
    <property type="entry name" value="PRK00094.1-2"/>
    <property type="match status" value="1"/>
</dbReference>
<dbReference type="NCBIfam" id="NF000942">
    <property type="entry name" value="PRK00094.1-4"/>
    <property type="match status" value="1"/>
</dbReference>
<dbReference type="PANTHER" id="PTHR11728">
    <property type="entry name" value="GLYCEROL-3-PHOSPHATE DEHYDROGENASE"/>
    <property type="match status" value="1"/>
</dbReference>
<dbReference type="PANTHER" id="PTHR11728:SF1">
    <property type="entry name" value="GLYCEROL-3-PHOSPHATE DEHYDROGENASE [NAD(+)] 2, CHLOROPLASTIC"/>
    <property type="match status" value="1"/>
</dbReference>
<dbReference type="Pfam" id="PF07479">
    <property type="entry name" value="NAD_Gly3P_dh_C"/>
    <property type="match status" value="1"/>
</dbReference>
<dbReference type="Pfam" id="PF01210">
    <property type="entry name" value="NAD_Gly3P_dh_N"/>
    <property type="match status" value="1"/>
</dbReference>
<dbReference type="PIRSF" id="PIRSF000114">
    <property type="entry name" value="Glycerol-3-P_dh"/>
    <property type="match status" value="1"/>
</dbReference>
<dbReference type="PRINTS" id="PR00077">
    <property type="entry name" value="GPDHDRGNASE"/>
</dbReference>
<dbReference type="SUPFAM" id="SSF48179">
    <property type="entry name" value="6-phosphogluconate dehydrogenase C-terminal domain-like"/>
    <property type="match status" value="1"/>
</dbReference>
<dbReference type="SUPFAM" id="SSF51735">
    <property type="entry name" value="NAD(P)-binding Rossmann-fold domains"/>
    <property type="match status" value="1"/>
</dbReference>
<dbReference type="PROSITE" id="PS00957">
    <property type="entry name" value="NAD_G3PDH"/>
    <property type="match status" value="1"/>
</dbReference>
<keyword id="KW-0963">Cytoplasm</keyword>
<keyword id="KW-0444">Lipid biosynthesis</keyword>
<keyword id="KW-0443">Lipid metabolism</keyword>
<keyword id="KW-0520">NAD</keyword>
<keyword id="KW-0521">NADP</keyword>
<keyword id="KW-0547">Nucleotide-binding</keyword>
<keyword id="KW-0560">Oxidoreductase</keyword>
<keyword id="KW-0594">Phospholipid biosynthesis</keyword>
<keyword id="KW-1208">Phospholipid metabolism</keyword>
<keyword id="KW-1185">Reference proteome</keyword>
<evidence type="ECO:0000255" key="1">
    <source>
        <dbReference type="HAMAP-Rule" id="MF_00394"/>
    </source>
</evidence>
<reference key="1">
    <citation type="journal article" date="2009" name="Proc. Natl. Acad. Sci. U.S.A.">
        <title>The genomic basis of trophic strategy in marine bacteria.</title>
        <authorList>
            <person name="Lauro F.M."/>
            <person name="McDougald D."/>
            <person name="Thomas T."/>
            <person name="Williams T.J."/>
            <person name="Egan S."/>
            <person name="Rice S."/>
            <person name="DeMaere M.Z."/>
            <person name="Ting L."/>
            <person name="Ertan H."/>
            <person name="Johnson J."/>
            <person name="Ferriera S."/>
            <person name="Lapidus A."/>
            <person name="Anderson I."/>
            <person name="Kyrpides N."/>
            <person name="Munk A.C."/>
            <person name="Detter C."/>
            <person name="Han C.S."/>
            <person name="Brown M.V."/>
            <person name="Robb F.T."/>
            <person name="Kjelleberg S."/>
            <person name="Cavicchioli R."/>
        </authorList>
    </citation>
    <scope>NUCLEOTIDE SEQUENCE [LARGE SCALE GENOMIC DNA]</scope>
    <source>
        <strain>DSM 13593 / LMG 18877 / RB2256</strain>
    </source>
</reference>
<accession>Q1GP43</accession>
<gene>
    <name evidence="1" type="primary">gpsA1</name>
    <name type="ordered locus">Sala_2874</name>
</gene>
<name>GPDA1_SPHAL</name>
<sequence>MTSYRNFGIVGGGAWGTALAQLLAADGAPVRLWAREADVVAAINAEHRNPVFLPGAPLSSSLTATTDLAAMTDLDALLVVVPVPYLRAVLTELPPGDAPLVFCSKGMEAGSFAFPVDMARDLAPGRPHAVLSGPTFAHEVAAGLPTAITLAAADPALATELAQALARPHFRPYVSTDVIGAEIGGAVKNILAIACGIVEGAGLGLNARAALISRGFAEMTRFGLSRGAKAETLAGLAGLGDLVLTCTSANSRNFALGQGLGRGEAIETLMADRRTIAEGAFSAPVVAAAARADGVDMPITDTVARLVAGEMRVADAIQALLSRPLRPEGQ</sequence>
<protein>
    <recommendedName>
        <fullName evidence="1">Glycerol-3-phosphate dehydrogenase [NAD(P)+] 1</fullName>
        <ecNumber evidence="1">1.1.1.94</ecNumber>
    </recommendedName>
    <alternativeName>
        <fullName evidence="1">NAD(P)(+)-dependent glycerol-3-phosphate dehydrogenase 1</fullName>
    </alternativeName>
    <alternativeName>
        <fullName evidence="1">NAD(P)H-dependent dihydroxyacetone-phosphate reductase 1</fullName>
    </alternativeName>
</protein>
<organism>
    <name type="scientific">Sphingopyxis alaskensis (strain DSM 13593 / LMG 18877 / RB2256)</name>
    <name type="common">Sphingomonas alaskensis</name>
    <dbReference type="NCBI Taxonomy" id="317655"/>
    <lineage>
        <taxon>Bacteria</taxon>
        <taxon>Pseudomonadati</taxon>
        <taxon>Pseudomonadota</taxon>
        <taxon>Alphaproteobacteria</taxon>
        <taxon>Sphingomonadales</taxon>
        <taxon>Sphingomonadaceae</taxon>
        <taxon>Sphingopyxis</taxon>
    </lineage>
</organism>
<proteinExistence type="inferred from homology"/>
<comment type="function">
    <text evidence="1">Catalyzes the reduction of the glycolytic intermediate dihydroxyacetone phosphate (DHAP) to sn-glycerol 3-phosphate (G3P), the key precursor for phospholipid synthesis.</text>
</comment>
<comment type="catalytic activity">
    <reaction evidence="1">
        <text>sn-glycerol 3-phosphate + NAD(+) = dihydroxyacetone phosphate + NADH + H(+)</text>
        <dbReference type="Rhea" id="RHEA:11092"/>
        <dbReference type="ChEBI" id="CHEBI:15378"/>
        <dbReference type="ChEBI" id="CHEBI:57540"/>
        <dbReference type="ChEBI" id="CHEBI:57597"/>
        <dbReference type="ChEBI" id="CHEBI:57642"/>
        <dbReference type="ChEBI" id="CHEBI:57945"/>
        <dbReference type="EC" id="1.1.1.94"/>
    </reaction>
    <physiologicalReaction direction="right-to-left" evidence="1">
        <dbReference type="Rhea" id="RHEA:11094"/>
    </physiologicalReaction>
</comment>
<comment type="catalytic activity">
    <reaction evidence="1">
        <text>sn-glycerol 3-phosphate + NADP(+) = dihydroxyacetone phosphate + NADPH + H(+)</text>
        <dbReference type="Rhea" id="RHEA:11096"/>
        <dbReference type="ChEBI" id="CHEBI:15378"/>
        <dbReference type="ChEBI" id="CHEBI:57597"/>
        <dbReference type="ChEBI" id="CHEBI:57642"/>
        <dbReference type="ChEBI" id="CHEBI:57783"/>
        <dbReference type="ChEBI" id="CHEBI:58349"/>
        <dbReference type="EC" id="1.1.1.94"/>
    </reaction>
    <physiologicalReaction direction="right-to-left" evidence="1">
        <dbReference type="Rhea" id="RHEA:11098"/>
    </physiologicalReaction>
</comment>
<comment type="pathway">
    <text evidence="1">Membrane lipid metabolism; glycerophospholipid metabolism.</text>
</comment>
<comment type="subcellular location">
    <subcellularLocation>
        <location evidence="1">Cytoplasm</location>
    </subcellularLocation>
</comment>
<comment type="similarity">
    <text evidence="1">Belongs to the NAD-dependent glycerol-3-phosphate dehydrogenase family.</text>
</comment>